<feature type="chain" id="PRO_0000329278" description="Phosphate acyltransferase">
    <location>
        <begin position="1"/>
        <end position="341"/>
    </location>
</feature>
<comment type="function">
    <text evidence="1">Catalyzes the reversible formation of acyl-phosphate (acyl-PO(4)) from acyl-[acyl-carrier-protein] (acyl-ACP). This enzyme utilizes acyl-ACP as fatty acyl donor, but not acyl-CoA.</text>
</comment>
<comment type="catalytic activity">
    <reaction evidence="1">
        <text>a fatty acyl-[ACP] + phosphate = an acyl phosphate + holo-[ACP]</text>
        <dbReference type="Rhea" id="RHEA:42292"/>
        <dbReference type="Rhea" id="RHEA-COMP:9685"/>
        <dbReference type="Rhea" id="RHEA-COMP:14125"/>
        <dbReference type="ChEBI" id="CHEBI:43474"/>
        <dbReference type="ChEBI" id="CHEBI:59918"/>
        <dbReference type="ChEBI" id="CHEBI:64479"/>
        <dbReference type="ChEBI" id="CHEBI:138651"/>
        <dbReference type="EC" id="2.3.1.274"/>
    </reaction>
</comment>
<comment type="pathway">
    <text evidence="1">Lipid metabolism; phospholipid metabolism.</text>
</comment>
<comment type="subunit">
    <text evidence="1">Homodimer. Probably interacts with PlsY.</text>
</comment>
<comment type="subcellular location">
    <subcellularLocation>
        <location evidence="1">Cytoplasm</location>
    </subcellularLocation>
    <text evidence="1">Associated with the membrane possibly through PlsY.</text>
</comment>
<comment type="similarity">
    <text evidence="1">Belongs to the PlsX family.</text>
</comment>
<comment type="sequence caution" evidence="2">
    <conflict type="erroneous initiation">
        <sequence resource="EMBL-CDS" id="ABU71864"/>
    </conflict>
</comment>
<gene>
    <name evidence="1" type="primary">plsX</name>
    <name type="ordered locus">VIBHAR_02911</name>
</gene>
<dbReference type="EC" id="2.3.1.274" evidence="1"/>
<dbReference type="EMBL" id="CP000789">
    <property type="protein sequence ID" value="ABU71864.1"/>
    <property type="status" value="ALT_INIT"/>
    <property type="molecule type" value="Genomic_DNA"/>
</dbReference>
<dbReference type="RefSeq" id="WP_038889875.1">
    <property type="nucleotide sequence ID" value="NC_022269.1"/>
</dbReference>
<dbReference type="SMR" id="A7MZU7"/>
<dbReference type="GeneID" id="67376773"/>
<dbReference type="KEGG" id="vha:VIBHAR_02911"/>
<dbReference type="PATRIC" id="fig|338187.36.peg.2838"/>
<dbReference type="UniPathway" id="UPA00085"/>
<dbReference type="Proteomes" id="UP000008152">
    <property type="component" value="Chromosome I"/>
</dbReference>
<dbReference type="GO" id="GO:0005737">
    <property type="term" value="C:cytoplasm"/>
    <property type="evidence" value="ECO:0007669"/>
    <property type="project" value="UniProtKB-SubCell"/>
</dbReference>
<dbReference type="GO" id="GO:0043811">
    <property type="term" value="F:phosphate:acyl-[acyl carrier protein] acyltransferase activity"/>
    <property type="evidence" value="ECO:0007669"/>
    <property type="project" value="UniProtKB-UniRule"/>
</dbReference>
<dbReference type="GO" id="GO:0006633">
    <property type="term" value="P:fatty acid biosynthetic process"/>
    <property type="evidence" value="ECO:0007669"/>
    <property type="project" value="UniProtKB-UniRule"/>
</dbReference>
<dbReference type="GO" id="GO:0008654">
    <property type="term" value="P:phospholipid biosynthetic process"/>
    <property type="evidence" value="ECO:0007669"/>
    <property type="project" value="UniProtKB-KW"/>
</dbReference>
<dbReference type="Gene3D" id="3.40.718.10">
    <property type="entry name" value="Isopropylmalate Dehydrogenase"/>
    <property type="match status" value="1"/>
</dbReference>
<dbReference type="HAMAP" id="MF_00019">
    <property type="entry name" value="PlsX"/>
    <property type="match status" value="1"/>
</dbReference>
<dbReference type="InterPro" id="IPR003664">
    <property type="entry name" value="FA_synthesis"/>
</dbReference>
<dbReference type="InterPro" id="IPR012281">
    <property type="entry name" value="Phospholipid_synth_PlsX-like"/>
</dbReference>
<dbReference type="NCBIfam" id="TIGR00182">
    <property type="entry name" value="plsX"/>
    <property type="match status" value="1"/>
</dbReference>
<dbReference type="PANTHER" id="PTHR30100">
    <property type="entry name" value="FATTY ACID/PHOSPHOLIPID SYNTHESIS PROTEIN PLSX"/>
    <property type="match status" value="1"/>
</dbReference>
<dbReference type="PANTHER" id="PTHR30100:SF1">
    <property type="entry name" value="PHOSPHATE ACYLTRANSFERASE"/>
    <property type="match status" value="1"/>
</dbReference>
<dbReference type="Pfam" id="PF02504">
    <property type="entry name" value="FA_synthesis"/>
    <property type="match status" value="1"/>
</dbReference>
<dbReference type="PIRSF" id="PIRSF002465">
    <property type="entry name" value="Phsphlp_syn_PlsX"/>
    <property type="match status" value="1"/>
</dbReference>
<dbReference type="SUPFAM" id="SSF53659">
    <property type="entry name" value="Isocitrate/Isopropylmalate dehydrogenase-like"/>
    <property type="match status" value="1"/>
</dbReference>
<protein>
    <recommendedName>
        <fullName evidence="1">Phosphate acyltransferase</fullName>
        <ecNumber evidence="1">2.3.1.274</ecNumber>
    </recommendedName>
    <alternativeName>
        <fullName evidence="1">Acyl-ACP phosphotransacylase</fullName>
    </alternativeName>
    <alternativeName>
        <fullName evidence="1">Acyl-[acyl-carrier-protein]--phosphate acyltransferase</fullName>
    </alternativeName>
    <alternativeName>
        <fullName evidence="1">Phosphate-acyl-ACP acyltransferase</fullName>
    </alternativeName>
</protein>
<reference key="1">
    <citation type="submission" date="2007-08" db="EMBL/GenBank/DDBJ databases">
        <authorList>
            <consortium name="The Vibrio harveyi Genome Sequencing Project"/>
            <person name="Bassler B."/>
            <person name="Clifton S.W."/>
            <person name="Fulton L."/>
            <person name="Delehaunty K."/>
            <person name="Fronick C."/>
            <person name="Harrison M."/>
            <person name="Markivic C."/>
            <person name="Fulton R."/>
            <person name="Tin-Wollam A.-M."/>
            <person name="Shah N."/>
            <person name="Pepin K."/>
            <person name="Nash W."/>
            <person name="Thiruvilangam P."/>
            <person name="Bhonagiri V."/>
            <person name="Waters C."/>
            <person name="Tu K.C."/>
            <person name="Irgon J."/>
            <person name="Wilson R.K."/>
        </authorList>
    </citation>
    <scope>NUCLEOTIDE SEQUENCE [LARGE SCALE GENOMIC DNA]</scope>
    <source>
        <strain>ATCC BAA-1116 / BB120</strain>
    </source>
</reference>
<organism>
    <name type="scientific">Vibrio campbellii (strain ATCC BAA-1116)</name>
    <dbReference type="NCBI Taxonomy" id="2902295"/>
    <lineage>
        <taxon>Bacteria</taxon>
        <taxon>Pseudomonadati</taxon>
        <taxon>Pseudomonadota</taxon>
        <taxon>Gammaproteobacteria</taxon>
        <taxon>Vibrionales</taxon>
        <taxon>Vibrionaceae</taxon>
        <taxon>Vibrio</taxon>
    </lineage>
</organism>
<proteinExistence type="inferred from homology"/>
<evidence type="ECO:0000255" key="1">
    <source>
        <dbReference type="HAMAP-Rule" id="MF_00019"/>
    </source>
</evidence>
<evidence type="ECO:0000305" key="2"/>
<keyword id="KW-0963">Cytoplasm</keyword>
<keyword id="KW-0444">Lipid biosynthesis</keyword>
<keyword id="KW-0443">Lipid metabolism</keyword>
<keyword id="KW-0594">Phospholipid biosynthesis</keyword>
<keyword id="KW-1208">Phospholipid metabolism</keyword>
<keyword id="KW-0808">Transferase</keyword>
<accession>A7MZU7</accession>
<sequence>MQSITVALDAMGGDFGPRVTVPAAVQALSHFPELKVILIGDQSLITSQLSQLGTSTSSRLSILHSEKVISNSEKPSLALRNSQNSSMRMAIDLVSDNEADACVSGGNTGALMALSRFVLKLLPGIERPALVSALPTISGKRTWMLDLGANVSCDADSLFQFAVMGSALAEEHLGRPPRVAVLNIGAEEIKGNDLVKRCAEMLSQTDAINFVGYIEGNQILHDVADVIVCDGFVGNVCLKASEGTAQLFIEKLKTSMMASTIKGWIARKLFSRLFNELKTLNPDQYNGASLLGLRGIVIKSHGSADVSAIVNALGEAVHEVKRQVPSRISDRLEAVLLERHY</sequence>
<name>PLSX_VIBC1</name>